<evidence type="ECO:0000250" key="1"/>
<evidence type="ECO:0000255" key="2"/>
<evidence type="ECO:0000305" key="3"/>
<feature type="chain" id="PRO_0000333159" description="Membrane-associated protein TcaA">
    <location>
        <begin position="1"/>
        <end position="460"/>
    </location>
</feature>
<feature type="topological domain" description="Cytoplasmic" evidence="2">
    <location>
        <begin position="1"/>
        <end position="49"/>
    </location>
</feature>
<feature type="transmembrane region" description="Helical" evidence="2">
    <location>
        <begin position="50"/>
        <end position="70"/>
    </location>
</feature>
<feature type="topological domain" description="Extracellular" evidence="2">
    <location>
        <begin position="71"/>
        <end position="460"/>
    </location>
</feature>
<feature type="zinc finger region" description="C4-type" evidence="2">
    <location>
        <begin position="4"/>
        <end position="21"/>
    </location>
</feature>
<sequence>MKSCPKCGQQAQDDVQICTQCGHKFDSRQALYRKSTDEDIQTNNIKMRKMVPWAIGFFILILIIILFFLLRNFNSPEAQTKILVNAIENNDKQKVATLLSTKDNKVDSEEAKVYINYIKDEVGLKQFVSDLKNTVHKLNKSKTSVASYIQTRSGQNILRVSKNGTRYIFFDNMSFTAPTKQPIVKPKEKTKYEFKSGGKKKMVIAEANKVTPIGNFIPGTYRIPAMKSTENGDFAGHLKFDFRQSNSETVDVTEDFEEANISVTLKGDTKLNDSSKKVTINDREMAFSSSKTYGPYPQNKDITISASGKAKGKTFTTQTKTIKASDLKYSTEITLNFDSEDIEDYVEKKEKEENSLKNKLIEFFAGYSLANNAAFNQSDFDFVSSYIKKGSSFYDDVKKRVSKGSLMMISSPQIIDAEKHGDKITATVRLINENGKQVDKEYELEQGSQDRLQLIKTSEK</sequence>
<dbReference type="EMBL" id="AJ938182">
    <property type="protein sequence ID" value="CAI81924.1"/>
    <property type="molecule type" value="Genomic_DNA"/>
</dbReference>
<dbReference type="RefSeq" id="WP_000833801.1">
    <property type="nucleotide sequence ID" value="NC_007622.1"/>
</dbReference>
<dbReference type="SMR" id="Q2YYX9"/>
<dbReference type="KEGG" id="sab:SAB2235c"/>
<dbReference type="HOGENOM" id="CLU_047245_0_0_9"/>
<dbReference type="GO" id="GO:0005886">
    <property type="term" value="C:plasma membrane"/>
    <property type="evidence" value="ECO:0007669"/>
    <property type="project" value="UniProtKB-SubCell"/>
</dbReference>
<dbReference type="GO" id="GO:0008270">
    <property type="term" value="F:zinc ion binding"/>
    <property type="evidence" value="ECO:0007669"/>
    <property type="project" value="UniProtKB-KW"/>
</dbReference>
<dbReference type="GO" id="GO:0046677">
    <property type="term" value="P:response to antibiotic"/>
    <property type="evidence" value="ECO:0007669"/>
    <property type="project" value="UniProtKB-KW"/>
</dbReference>
<dbReference type="InterPro" id="IPR023599">
    <property type="entry name" value="Mem_prot_TcaA"/>
</dbReference>
<dbReference type="InterPro" id="IPR054529">
    <property type="entry name" value="TcaA_2nd"/>
</dbReference>
<dbReference type="InterPro" id="IPR054530">
    <property type="entry name" value="TcaA_4th"/>
</dbReference>
<dbReference type="PANTHER" id="PTHR40038">
    <property type="entry name" value="MEMBRANE-ASSOCIATED PROTEIN TCAA"/>
    <property type="match status" value="1"/>
</dbReference>
<dbReference type="PANTHER" id="PTHR40038:SF1">
    <property type="entry name" value="MEMBRANE-ASSOCIATED PROTEIN TCAA"/>
    <property type="match status" value="1"/>
</dbReference>
<dbReference type="Pfam" id="PF22813">
    <property type="entry name" value="TcaA_2nd"/>
    <property type="match status" value="1"/>
</dbReference>
<dbReference type="Pfam" id="PF22820">
    <property type="entry name" value="TcaA_3rd_4th"/>
    <property type="match status" value="1"/>
</dbReference>
<dbReference type="Pfam" id="PF22819">
    <property type="entry name" value="TcaA_5th"/>
    <property type="match status" value="1"/>
</dbReference>
<dbReference type="PIRSF" id="PIRSF032522">
    <property type="entry name" value="TcaA"/>
    <property type="match status" value="1"/>
</dbReference>
<comment type="function">
    <text evidence="1">Plays a major role in decreasing resistance to glycopeptide antibiotics.</text>
</comment>
<comment type="subcellular location">
    <subcellularLocation>
        <location evidence="1">Cell membrane</location>
        <topology evidence="1">Single-pass membrane protein</topology>
    </subcellularLocation>
</comment>
<comment type="similarity">
    <text evidence="3">Belongs to the TcaA family.</text>
</comment>
<proteinExistence type="inferred from homology"/>
<accession>Q2YYX9</accession>
<organism>
    <name type="scientific">Staphylococcus aureus (strain bovine RF122 / ET3-1)</name>
    <dbReference type="NCBI Taxonomy" id="273036"/>
    <lineage>
        <taxon>Bacteria</taxon>
        <taxon>Bacillati</taxon>
        <taxon>Bacillota</taxon>
        <taxon>Bacilli</taxon>
        <taxon>Bacillales</taxon>
        <taxon>Staphylococcaceae</taxon>
        <taxon>Staphylococcus</taxon>
    </lineage>
</organism>
<protein>
    <recommendedName>
        <fullName>Membrane-associated protein TcaA</fullName>
    </recommendedName>
</protein>
<name>TCAA_STAAB</name>
<gene>
    <name type="primary">tcaA</name>
    <name type="ordered locus">SAB2235c</name>
</gene>
<keyword id="KW-0046">Antibiotic resistance</keyword>
<keyword id="KW-1003">Cell membrane</keyword>
<keyword id="KW-0472">Membrane</keyword>
<keyword id="KW-0479">Metal-binding</keyword>
<keyword id="KW-0812">Transmembrane</keyword>
<keyword id="KW-1133">Transmembrane helix</keyword>
<keyword id="KW-0862">Zinc</keyword>
<keyword id="KW-0863">Zinc-finger</keyword>
<reference key="1">
    <citation type="journal article" date="2007" name="PLoS ONE">
        <title>Molecular correlates of host specialization in Staphylococcus aureus.</title>
        <authorList>
            <person name="Herron-Olson L."/>
            <person name="Fitzgerald J.R."/>
            <person name="Musser J.M."/>
            <person name="Kapur V."/>
        </authorList>
    </citation>
    <scope>NUCLEOTIDE SEQUENCE [LARGE SCALE GENOMIC DNA]</scope>
    <source>
        <strain>bovine RF122 / ET3-1</strain>
    </source>
</reference>